<name>AUTS2_HUMAN</name>
<organism>
    <name type="scientific">Homo sapiens</name>
    <name type="common">Human</name>
    <dbReference type="NCBI Taxonomy" id="9606"/>
    <lineage>
        <taxon>Eukaryota</taxon>
        <taxon>Metazoa</taxon>
        <taxon>Chordata</taxon>
        <taxon>Craniata</taxon>
        <taxon>Vertebrata</taxon>
        <taxon>Euteleostomi</taxon>
        <taxon>Mammalia</taxon>
        <taxon>Eutheria</taxon>
        <taxon>Euarchontoglires</taxon>
        <taxon>Primates</taxon>
        <taxon>Haplorrhini</taxon>
        <taxon>Catarrhini</taxon>
        <taxon>Hominidae</taxon>
        <taxon>Homo</taxon>
    </lineage>
</organism>
<proteinExistence type="evidence at protein level"/>
<sequence length="1259" mass="138982">MDGPTRGHGLRKKRRSRSQRDRERRSRGGLGAGAAGGGGAGRTRALSLASSSGSDKEDNGKPPSSAPSRPRPPRRKRRESTSAEEDIIDGFAMTSFVTFEALEKDVALKPQERVEKRQTPLTKKKREALTNGLSFHSKKSRLSHPHHYSSDRENDRNLCQHLGKRKKMPKALRQLKPGQNSCRDSDSESASGESKGFHRSSSRERLSDSSAPSSLGTGYFCDSDSDQEEKASDASSEKLFNTVIVNKDPELGVGTLPEHDSQDAGPIVPKISGLERSQEKSQDCCKEPIFEPVVLKDPCPQVAQPIPQPQTEPQLRAPSPDPDLVQRTEAPPQPPPLSTQPPQGPPEAQLQPAPQPQVQRPPRPQSPTQLLHQNLPPVQAHPSAQSLSQPLSAYNSSSLSLNSLSSSRSSTPAKTQPAPPHISHHPSASPFPLSLPNHSPLHSFTPTLQPPAHSHHPNMFAPPTALPPPPPLTSGSLQVAGHPAGSTYSEQDILRQELNTRFLASQSADRGASLGPPPYLRTEFHQHQHQHQHTHQHTHQHTFTPFPHAIPPTAIMPTPAPPMFDKYPTKVDPFYRHSLFHSYPPAVSGIPPMIPPTGPFGSLQGAFQPKTSNPIDVAARPGTVPHTLLQKDPRLTDPFRPMLRKPGKWCAMHVHIAWQIYHHQQKVKKQMQSDPHKLDFGLKPEFLSRPPGPSLFGAIHHPHDLARPSTLFSAAGAAHPTGTPFGPPPHHSNFLNPAAHLEPFNRPSTFTGLAAVGGNAFGGLGNPSVTPNSMFGHKDGPSVQNFSNPHEPWNRLHRTPPSFPTPPPWLKPGELERSASAAAHDRDRDVDKRDSSVSKDDKERESVEKRHSSHPSPAPVLPVNALGHTRSSTEQIRAHLNTEAREKDKPKERERDHSESRKDLAADEHKAKEGHLPEKDGHGHEGRAAGEEAKQLARVPSPYVRTPVVESARPNSTSSREAEPRKGEPAYENPKKSSEVKVKEERKEDHDLPPEAPQTHRASEPPPPNSSSSVHPGPLASMPMTVGVTGIHPMNSISSLDRTRMMTPFMGISPLPGGERFPYPSFHWDPIRDPLRDPYRELDIHRRDPLGRDFLLRNDPLHRLSTPRLYEADRSFRDREPHDYSHHHHHHHHPLSVDPRREHERGGHLDERERLHMLREDYEHTRLHSVHPASLDGHLPHPSLITPGLPSMHYPRISPTAGNQNGLLNKTPPTAALSAPPPLISTLGGRPVSPRRTTPLSAEIRERPPSHTLKDIEAR</sequence>
<feature type="chain" id="PRO_0000064767" description="Autism susceptibility gene 2 protein">
    <location>
        <begin position="1"/>
        <end position="1259"/>
    </location>
</feature>
<feature type="region of interest" description="Disordered" evidence="2">
    <location>
        <begin position="1"/>
        <end position="87"/>
    </location>
</feature>
<feature type="region of interest" description="Disordered" evidence="2">
    <location>
        <begin position="108"/>
        <end position="285"/>
    </location>
</feature>
<feature type="region of interest" description="Important for regulation of lamellipodia formation" evidence="1">
    <location>
        <begin position="289"/>
        <end position="472"/>
    </location>
</feature>
<feature type="region of interest" description="Disordered" evidence="2">
    <location>
        <begin position="299"/>
        <end position="470"/>
    </location>
</feature>
<feature type="region of interest" description="Disordered" evidence="2">
    <location>
        <begin position="771"/>
        <end position="1027"/>
    </location>
</feature>
<feature type="region of interest" description="Disordered" evidence="2">
    <location>
        <begin position="1119"/>
        <end position="1146"/>
    </location>
</feature>
<feature type="region of interest" description="Disordered" evidence="2">
    <location>
        <begin position="1217"/>
        <end position="1259"/>
    </location>
</feature>
<feature type="compositionally biased region" description="Basic residues" evidence="2">
    <location>
        <begin position="8"/>
        <end position="17"/>
    </location>
</feature>
<feature type="compositionally biased region" description="Gly residues" evidence="2">
    <location>
        <begin position="28"/>
        <end position="41"/>
    </location>
</feature>
<feature type="compositionally biased region" description="Basic and acidic residues" evidence="2">
    <location>
        <begin position="108"/>
        <end position="118"/>
    </location>
</feature>
<feature type="compositionally biased region" description="Basic residues" evidence="2">
    <location>
        <begin position="136"/>
        <end position="147"/>
    </location>
</feature>
<feature type="compositionally biased region" description="Basic and acidic residues" evidence="2">
    <location>
        <begin position="148"/>
        <end position="158"/>
    </location>
</feature>
<feature type="compositionally biased region" description="Polar residues" evidence="2">
    <location>
        <begin position="177"/>
        <end position="192"/>
    </location>
</feature>
<feature type="compositionally biased region" description="Basic and acidic residues" evidence="2">
    <location>
        <begin position="276"/>
        <end position="285"/>
    </location>
</feature>
<feature type="compositionally biased region" description="Pro residues" evidence="2">
    <location>
        <begin position="331"/>
        <end position="345"/>
    </location>
</feature>
<feature type="compositionally biased region" description="Pro residues" evidence="2">
    <location>
        <begin position="353"/>
        <end position="365"/>
    </location>
</feature>
<feature type="compositionally biased region" description="Low complexity" evidence="2">
    <location>
        <begin position="386"/>
        <end position="410"/>
    </location>
</feature>
<feature type="compositionally biased region" description="Polar residues" evidence="2">
    <location>
        <begin position="436"/>
        <end position="447"/>
    </location>
</feature>
<feature type="compositionally biased region" description="Pro residues" evidence="2">
    <location>
        <begin position="801"/>
        <end position="810"/>
    </location>
</feature>
<feature type="compositionally biased region" description="Basic and acidic residues" evidence="2">
    <location>
        <begin position="813"/>
        <end position="850"/>
    </location>
</feature>
<feature type="compositionally biased region" description="Basic and acidic residues" evidence="2">
    <location>
        <begin position="876"/>
        <end position="935"/>
    </location>
</feature>
<feature type="compositionally biased region" description="Basic and acidic residues" evidence="2">
    <location>
        <begin position="960"/>
        <end position="993"/>
    </location>
</feature>
<feature type="compositionally biased region" description="Basic residues" evidence="2">
    <location>
        <begin position="1125"/>
        <end position="1134"/>
    </location>
</feature>
<feature type="compositionally biased region" description="Basic and acidic residues" evidence="2">
    <location>
        <begin position="1243"/>
        <end position="1259"/>
    </location>
</feature>
<feature type="modified residue" description="Phosphoserine" evidence="11">
    <location>
        <position position="1198"/>
    </location>
</feature>
<feature type="modified residue" description="Phosphoserine" evidence="10 12">
    <location>
        <position position="1233"/>
    </location>
</feature>
<feature type="splice variant" id="VSP_057063" description="In isoform 5." evidence="7">
    <location>
        <begin position="1"/>
        <end position="555"/>
    </location>
</feature>
<feature type="splice variant" id="VSP_043556" description="In isoform 3." evidence="6">
    <original>CDSDSDQEEKASDASSEKLFNTVIVNKDPELGVGTLPEHDSQDAGP</original>
    <variation>RSGKMCLGEEACLKSGNDMKRDVSNTSSWASNRESFFSLVKLLKGF</variation>
    <location>
        <begin position="221"/>
        <end position="266"/>
    </location>
</feature>
<feature type="splice variant" id="VSP_043557" description="In isoform 3." evidence="6">
    <location>
        <begin position="267"/>
        <end position="1259"/>
    </location>
</feature>
<feature type="splice variant" id="VSP_003792" description="In isoform 2 and isoform 5." evidence="6 7 8">
    <location>
        <begin position="611"/>
        <end position="634"/>
    </location>
</feature>
<feature type="sequence variant" id="VAR_013864" description="In dbSNP:rs2293507." evidence="3">
    <original>A</original>
    <variation>S</variation>
    <location>
        <position position="303"/>
    </location>
</feature>
<feature type="sequence conflict" description="In Ref. 3; BAA23714." evidence="9" ref="3">
    <original>P</original>
    <variation>S</variation>
    <location>
        <position position="177"/>
    </location>
</feature>
<evidence type="ECO:0000250" key="1">
    <source>
        <dbReference type="UniProtKB" id="A0A087WPF7"/>
    </source>
</evidence>
<evidence type="ECO:0000256" key="2">
    <source>
        <dbReference type="SAM" id="MobiDB-lite"/>
    </source>
</evidence>
<evidence type="ECO:0000269" key="3">
    <source>
    </source>
</evidence>
<evidence type="ECO:0000269" key="4">
    <source>
    </source>
</evidence>
<evidence type="ECO:0000269" key="5">
    <source>
    </source>
</evidence>
<evidence type="ECO:0000303" key="6">
    <source>
    </source>
</evidence>
<evidence type="ECO:0000303" key="7">
    <source>
    </source>
</evidence>
<evidence type="ECO:0000303" key="8">
    <source>
    </source>
</evidence>
<evidence type="ECO:0000305" key="9"/>
<evidence type="ECO:0007744" key="10">
    <source>
    </source>
</evidence>
<evidence type="ECO:0007744" key="11">
    <source>
    </source>
</evidence>
<evidence type="ECO:0007744" key="12">
    <source>
    </source>
</evidence>
<keyword id="KW-0025">Alternative splicing</keyword>
<keyword id="KW-1269">Autism</keyword>
<keyword id="KW-1268">Autism spectrum disorder</keyword>
<keyword id="KW-0966">Cell projection</keyword>
<keyword id="KW-0160">Chromosomal rearrangement</keyword>
<keyword id="KW-0963">Cytoplasm</keyword>
<keyword id="KW-0206">Cytoskeleton</keyword>
<keyword id="KW-0991">Intellectual disability</keyword>
<keyword id="KW-0539">Nucleus</keyword>
<keyword id="KW-0597">Phosphoprotein</keyword>
<keyword id="KW-1267">Proteomics identification</keyword>
<keyword id="KW-1185">Reference proteome</keyword>
<keyword id="KW-0804">Transcription</keyword>
<keyword id="KW-0805">Transcription regulation</keyword>
<accession>Q8WXX7</accession>
<accession>A4D1Y9</accession>
<accession>L7QET3</accession>
<accession>L7QF75</accession>
<accession>Q5D049</accession>
<accession>Q6PJU5</accession>
<accession>Q9Y4F2</accession>
<reference key="1">
    <citation type="journal article" date="2002" name="Genomics">
        <title>Identification of a novel gene on chromosome 7q11.2 interrupted by a translocation breakpoint in a pair of autistic twins.</title>
        <authorList>
            <person name="Sultana R."/>
            <person name="Yu C.-H."/>
            <person name="Yu J."/>
            <person name="Munson J."/>
            <person name="Chen D."/>
            <person name="Hua W."/>
            <person name="Estes A."/>
            <person name="Cortes F."/>
            <person name="de la Barra F."/>
            <person name="Yu D."/>
            <person name="Haider S.T."/>
            <person name="Trask B.J."/>
            <person name="Green E.D."/>
            <person name="Raskind W.H."/>
            <person name="Disteche C.M."/>
            <person name="Wijsman E."/>
            <person name="Dawson G."/>
            <person name="Storm D.R."/>
            <person name="Schellenberg G.D."/>
            <person name="Villacres E.C."/>
        </authorList>
    </citation>
    <scope>NUCLEOTIDE SEQUENCE [MRNA] (ISOFORM 1)</scope>
    <scope>TISSUE SPECIFICITY</scope>
    <scope>VARIANT SER-303</scope>
</reference>
<reference key="2">
    <citation type="journal article" date="2013" name="Am. J. Hum. Genet.">
        <title>Exonic deletions in AUTS2 cause a syndromic form of intellectual disability and suggest a critical role for the C terminus.</title>
        <authorList>
            <person name="Beunders G."/>
            <person name="Voorhoeve E."/>
            <person name="Golzio C."/>
            <person name="Pardo L.M."/>
            <person name="Rosenfeld J.A."/>
            <person name="Talkowski M.E."/>
            <person name="Simonic I."/>
            <person name="Lionel A.C."/>
            <person name="Vergult S."/>
            <person name="Pyatt R.E."/>
            <person name="van de Kamp J."/>
            <person name="Nieuwint A."/>
            <person name="Weiss M.M."/>
            <person name="Rizzu P."/>
            <person name="Verwer L.E."/>
            <person name="van Spaendonk R.M."/>
            <person name="Shen Y."/>
            <person name="Wu B.L."/>
            <person name="Yu T."/>
            <person name="Yu Y."/>
            <person name="Chiang C."/>
            <person name="Gusella J.F."/>
            <person name="Lindgren A.M."/>
            <person name="Morton C.C."/>
            <person name="van Binsbergen E."/>
            <person name="Bulk S."/>
            <person name="van Rossem E."/>
            <person name="Vanakker O."/>
            <person name="Armstrong R."/>
            <person name="Park S.M."/>
            <person name="Greenhalgh L."/>
            <person name="Maye U."/>
            <person name="Neill N.J."/>
            <person name="Abbott K.M."/>
            <person name="Sell S."/>
            <person name="Ladda R."/>
            <person name="Farber D.M."/>
            <person name="Bader P.I."/>
            <person name="Cushing T."/>
            <person name="Drautz J.M."/>
            <person name="Konczal L."/>
            <person name="Nash P."/>
            <person name="de Los Reyes E."/>
            <person name="Carter M.T."/>
            <person name="Hopkins E."/>
            <person name="Marshall C.R."/>
            <person name="Osborne L.R."/>
            <person name="Gripp K.W."/>
            <person name="Thrush D.L."/>
            <person name="Hashimoto S."/>
            <person name="Gastier-Foster J.M."/>
            <person name="Astbury C."/>
            <person name="Ylstra B."/>
            <person name="Meijers-Heijboer H."/>
            <person name="Posthuma D."/>
            <person name="Menten B."/>
            <person name="Mortier G."/>
            <person name="Scherer S.W."/>
            <person name="Eichler E.E."/>
            <person name="Girirajan S."/>
            <person name="Katsanis N."/>
            <person name="Groffen A.J."/>
            <person name="Sistermans E.A."/>
        </authorList>
    </citation>
    <scope>NUCLEOTIDE SEQUENCE [MRNA] (ISOFORMS 2 AND 5)</scope>
    <scope>INVOLVEMENT IN MRD26</scope>
    <scope>TISSUE SPECIFICITY</scope>
</reference>
<reference key="3">
    <citation type="journal article" date="1997" name="DNA Res.">
        <title>Prediction of the coding sequences of unidentified human genes. VIII. 78 new cDNA clones from brain which code for large proteins in vitro.</title>
        <authorList>
            <person name="Ishikawa K."/>
            <person name="Nagase T."/>
            <person name="Nakajima D."/>
            <person name="Seki N."/>
            <person name="Ohira M."/>
            <person name="Miyajima N."/>
            <person name="Tanaka A."/>
            <person name="Kotani H."/>
            <person name="Nomura N."/>
            <person name="Ohara O."/>
        </authorList>
    </citation>
    <scope>NUCLEOTIDE SEQUENCE [LARGE SCALE MRNA] (ISOFORM 2)</scope>
    <source>
        <tissue>Brain</tissue>
    </source>
</reference>
<reference key="4">
    <citation type="journal article" date="2002" name="DNA Res.">
        <title>Construction of expression-ready cDNA clones for KIAA genes: manual curation of 330 KIAA cDNA clones.</title>
        <authorList>
            <person name="Nakajima D."/>
            <person name="Okazaki N."/>
            <person name="Yamakawa H."/>
            <person name="Kikuno R."/>
            <person name="Ohara O."/>
            <person name="Nagase T."/>
        </authorList>
    </citation>
    <scope>SEQUENCE REVISION</scope>
</reference>
<reference key="5">
    <citation type="journal article" date="2003" name="Nature">
        <title>The DNA sequence of human chromosome 7.</title>
        <authorList>
            <person name="Hillier L.W."/>
            <person name="Fulton R.S."/>
            <person name="Fulton L.A."/>
            <person name="Graves T.A."/>
            <person name="Pepin K.H."/>
            <person name="Wagner-McPherson C."/>
            <person name="Layman D."/>
            <person name="Maas J."/>
            <person name="Jaeger S."/>
            <person name="Walker R."/>
            <person name="Wylie K."/>
            <person name="Sekhon M."/>
            <person name="Becker M.C."/>
            <person name="O'Laughlin M.D."/>
            <person name="Schaller M.E."/>
            <person name="Fewell G.A."/>
            <person name="Delehaunty K.D."/>
            <person name="Miner T.L."/>
            <person name="Nash W.E."/>
            <person name="Cordes M."/>
            <person name="Du H."/>
            <person name="Sun H."/>
            <person name="Edwards J."/>
            <person name="Bradshaw-Cordum H."/>
            <person name="Ali J."/>
            <person name="Andrews S."/>
            <person name="Isak A."/>
            <person name="Vanbrunt A."/>
            <person name="Nguyen C."/>
            <person name="Du F."/>
            <person name="Lamar B."/>
            <person name="Courtney L."/>
            <person name="Kalicki J."/>
            <person name="Ozersky P."/>
            <person name="Bielicki L."/>
            <person name="Scott K."/>
            <person name="Holmes A."/>
            <person name="Harkins R."/>
            <person name="Harris A."/>
            <person name="Strong C.M."/>
            <person name="Hou S."/>
            <person name="Tomlinson C."/>
            <person name="Dauphin-Kohlberg S."/>
            <person name="Kozlowicz-Reilly A."/>
            <person name="Leonard S."/>
            <person name="Rohlfing T."/>
            <person name="Rock S.M."/>
            <person name="Tin-Wollam A.-M."/>
            <person name="Abbott A."/>
            <person name="Minx P."/>
            <person name="Maupin R."/>
            <person name="Strowmatt C."/>
            <person name="Latreille P."/>
            <person name="Miller N."/>
            <person name="Johnson D."/>
            <person name="Murray J."/>
            <person name="Woessner J.P."/>
            <person name="Wendl M.C."/>
            <person name="Yang S.-P."/>
            <person name="Schultz B.R."/>
            <person name="Wallis J.W."/>
            <person name="Spieth J."/>
            <person name="Bieri T.A."/>
            <person name="Nelson J.O."/>
            <person name="Berkowicz N."/>
            <person name="Wohldmann P.E."/>
            <person name="Cook L.L."/>
            <person name="Hickenbotham M.T."/>
            <person name="Eldred J."/>
            <person name="Williams D."/>
            <person name="Bedell J.A."/>
            <person name="Mardis E.R."/>
            <person name="Clifton S.W."/>
            <person name="Chissoe S.L."/>
            <person name="Marra M.A."/>
            <person name="Raymond C."/>
            <person name="Haugen E."/>
            <person name="Gillett W."/>
            <person name="Zhou Y."/>
            <person name="James R."/>
            <person name="Phelps K."/>
            <person name="Iadanoto S."/>
            <person name="Bubb K."/>
            <person name="Simms E."/>
            <person name="Levy R."/>
            <person name="Clendenning J."/>
            <person name="Kaul R."/>
            <person name="Kent W.J."/>
            <person name="Furey T.S."/>
            <person name="Baertsch R.A."/>
            <person name="Brent M.R."/>
            <person name="Keibler E."/>
            <person name="Flicek P."/>
            <person name="Bork P."/>
            <person name="Suyama M."/>
            <person name="Bailey J.A."/>
            <person name="Portnoy M.E."/>
            <person name="Torrents D."/>
            <person name="Chinwalla A.T."/>
            <person name="Gish W.R."/>
            <person name="Eddy S.R."/>
            <person name="McPherson J.D."/>
            <person name="Olson M.V."/>
            <person name="Eichler E.E."/>
            <person name="Green E.D."/>
            <person name="Waterston R.H."/>
            <person name="Wilson R.K."/>
        </authorList>
    </citation>
    <scope>NUCLEOTIDE SEQUENCE [LARGE SCALE GENOMIC DNA]</scope>
</reference>
<reference key="6">
    <citation type="journal article" date="2003" name="Science">
        <title>Human chromosome 7: DNA sequence and biology.</title>
        <authorList>
            <person name="Scherer S.W."/>
            <person name="Cheung J."/>
            <person name="MacDonald J.R."/>
            <person name="Osborne L.R."/>
            <person name="Nakabayashi K."/>
            <person name="Herbrick J.-A."/>
            <person name="Carson A.R."/>
            <person name="Parker-Katiraee L."/>
            <person name="Skaug J."/>
            <person name="Khaja R."/>
            <person name="Zhang J."/>
            <person name="Hudek A.K."/>
            <person name="Li M."/>
            <person name="Haddad M."/>
            <person name="Duggan G.E."/>
            <person name="Fernandez B.A."/>
            <person name="Kanematsu E."/>
            <person name="Gentles S."/>
            <person name="Christopoulos C.C."/>
            <person name="Choufani S."/>
            <person name="Kwasnicka D."/>
            <person name="Zheng X.H."/>
            <person name="Lai Z."/>
            <person name="Nusskern D.R."/>
            <person name="Zhang Q."/>
            <person name="Gu Z."/>
            <person name="Lu F."/>
            <person name="Zeesman S."/>
            <person name="Nowaczyk M.J."/>
            <person name="Teshima I."/>
            <person name="Chitayat D."/>
            <person name="Shuman C."/>
            <person name="Weksberg R."/>
            <person name="Zackai E.H."/>
            <person name="Grebe T.A."/>
            <person name="Cox S.R."/>
            <person name="Kirkpatrick S.J."/>
            <person name="Rahman N."/>
            <person name="Friedman J.M."/>
            <person name="Heng H.H.Q."/>
            <person name="Pelicci P.G."/>
            <person name="Lo-Coco F."/>
            <person name="Belloni E."/>
            <person name="Shaffer L.G."/>
            <person name="Pober B."/>
            <person name="Morton C.C."/>
            <person name="Gusella J.F."/>
            <person name="Bruns G.A.P."/>
            <person name="Korf B.R."/>
            <person name="Quade B.J."/>
            <person name="Ligon A.H."/>
            <person name="Ferguson H."/>
            <person name="Higgins A.W."/>
            <person name="Leach N.T."/>
            <person name="Herrick S.R."/>
            <person name="Lemyre E."/>
            <person name="Farra C.G."/>
            <person name="Kim H.-G."/>
            <person name="Summers A.M."/>
            <person name="Gripp K.W."/>
            <person name="Roberts W."/>
            <person name="Szatmari P."/>
            <person name="Winsor E.J.T."/>
            <person name="Grzeschik K.-H."/>
            <person name="Teebi A."/>
            <person name="Minassian B.A."/>
            <person name="Kere J."/>
            <person name="Armengol L."/>
            <person name="Pujana M.A."/>
            <person name="Estivill X."/>
            <person name="Wilson M.D."/>
            <person name="Koop B.F."/>
            <person name="Tosi S."/>
            <person name="Moore G.E."/>
            <person name="Boright A.P."/>
            <person name="Zlotorynski E."/>
            <person name="Kerem B."/>
            <person name="Kroisel P.M."/>
            <person name="Petek E."/>
            <person name="Oscier D.G."/>
            <person name="Mould S.J."/>
            <person name="Doehner H."/>
            <person name="Doehner K."/>
            <person name="Rommens J.M."/>
            <person name="Vincent J.B."/>
            <person name="Venter J.C."/>
            <person name="Li P.W."/>
            <person name="Mural R.J."/>
            <person name="Adams M.D."/>
            <person name="Tsui L.-C."/>
        </authorList>
    </citation>
    <scope>NUCLEOTIDE SEQUENCE [LARGE SCALE GENOMIC DNA]</scope>
</reference>
<reference key="7">
    <citation type="journal article" date="2004" name="Genome Res.">
        <title>The status, quality, and expansion of the NIH full-length cDNA project: the Mammalian Gene Collection (MGC).</title>
        <authorList>
            <consortium name="The MGC Project Team"/>
        </authorList>
    </citation>
    <scope>NUCLEOTIDE SEQUENCE [LARGE SCALE MRNA] (ISOFORMS 2 AND 3)</scope>
    <source>
        <tissue>Muscle</tissue>
        <tissue>Placenta</tissue>
    </source>
</reference>
<reference key="8">
    <citation type="journal article" date="2009" name="Sci. Signal.">
        <title>Quantitative phosphoproteomic analysis of T cell receptor signaling reveals system-wide modulation of protein-protein interactions.</title>
        <authorList>
            <person name="Mayya V."/>
            <person name="Lundgren D.H."/>
            <person name="Hwang S.-I."/>
            <person name="Rezaul K."/>
            <person name="Wu L."/>
            <person name="Eng J.K."/>
            <person name="Rodionov V."/>
            <person name="Han D.K."/>
        </authorList>
    </citation>
    <scope>PHOSPHORYLATION [LARGE SCALE ANALYSIS] AT SER-1233</scope>
    <scope>IDENTIFICATION BY MASS SPECTROMETRY [LARGE SCALE ANALYSIS]</scope>
    <source>
        <tissue>Leukemic T-cell</tissue>
    </source>
</reference>
<reference key="9">
    <citation type="journal article" date="2011" name="Sci. Signal.">
        <title>System-wide temporal characterization of the proteome and phosphoproteome of human embryonic stem cell differentiation.</title>
        <authorList>
            <person name="Rigbolt K.T."/>
            <person name="Prokhorova T.A."/>
            <person name="Akimov V."/>
            <person name="Henningsen J."/>
            <person name="Johansen P.T."/>
            <person name="Kratchmarova I."/>
            <person name="Kassem M."/>
            <person name="Mann M."/>
            <person name="Olsen J.V."/>
            <person name="Blagoev B."/>
        </authorList>
    </citation>
    <scope>PHOSPHORYLATION [LARGE SCALE ANALYSIS] AT SER-1198</scope>
    <scope>IDENTIFICATION BY MASS SPECTROMETRY [LARGE SCALE ANALYSIS]</scope>
</reference>
<reference key="10">
    <citation type="journal article" date="2014" name="J. Proteomics">
        <title>An enzyme assisted RP-RPLC approach for in-depth analysis of human liver phosphoproteome.</title>
        <authorList>
            <person name="Bian Y."/>
            <person name="Song C."/>
            <person name="Cheng K."/>
            <person name="Dong M."/>
            <person name="Wang F."/>
            <person name="Huang J."/>
            <person name="Sun D."/>
            <person name="Wang L."/>
            <person name="Ye M."/>
            <person name="Zou H."/>
        </authorList>
    </citation>
    <scope>PHOSPHORYLATION [LARGE SCALE ANALYSIS] AT SER-1233</scope>
    <scope>IDENTIFICATION BY MASS SPECTROMETRY [LARGE SCALE ANALYSIS]</scope>
    <source>
        <tissue>Liver</tissue>
    </source>
</reference>
<reference key="11">
    <citation type="journal article" date="2014" name="Nature">
        <title>An AUTS2-polycomb complex activates gene expression in the CNS.</title>
        <authorList>
            <person name="Gao Z."/>
            <person name="Lee P."/>
            <person name="Stafford J.M."/>
            <person name="von Schimmelmann M."/>
            <person name="Schaefer A."/>
            <person name="Reinberg D."/>
        </authorList>
    </citation>
    <scope>FUNCTION</scope>
    <scope>SUBCELLULAR LOCATION</scope>
    <scope>IDENTIFICATION IN A COMPLEX WITH PCGF5; RNF2; CSNK2B AND RYBP</scope>
    <scope>INTERACTION WITH EP300</scope>
</reference>
<comment type="function">
    <text evidence="1 5">Component of a Polycomb group (PcG) multiprotein PRC1-like complex, a complex class required to maintain the transcriptionally repressive state of many genes, including Hox genes, throughout development. PcG PRC1 complex acts via chromatin remodeling and modification of histones; it mediates monoubiquitination of histone H2A 'Lys-119', rendering chromatin heritably changed in its expressibility (PubMed:25519132). The PRC1-like complex that contains PCGF5, RNF2, CSNK2B, RYBP and AUTS2 has decreased histone H2A ubiquitination activity, due to the phosphorylation of RNF2 by CSNK2B (PubMed:25519132). As a consequence, the complex mediates transcriptional activation (PubMed:25519132). In the cytoplasm, plays a role in axon and dendrite elongation and in neuronal migration during embryonic brain development. Promotes reorganization of the actin cytoskeleton, lamellipodia formation and neurite elongation via its interaction with RAC guanine nucleotide exchange factors, which then leads to the activation of RAC1 (By similarity).</text>
</comment>
<comment type="subunit">
    <text evidence="1 5">Component of a PRC1-like complex that contains PCGF5, RNF2, CSNK2B, RYBP and AUTS2. Within this complex, interacts directly with PCGF5 and CSNK2B (PubMed:25519132). Interacts with the histone acetyltransferase EP300/p300 (PubMed:25519132). Interacts (via Pro-rich region) with PREX1, DOCK1 and ELMO2 (By similarity).</text>
</comment>
<comment type="interaction">
    <interactant intactId="EBI-2875359">
        <id>Q8WXX7</id>
    </interactant>
    <interactant intactId="EBI-447295">
        <id>Q09472</id>
        <label>EP300</label>
    </interactant>
    <organismsDiffer>false</organismsDiffer>
    <experiments>6</experiments>
</comment>
<comment type="interaction">
    <interactant intactId="EBI-2875359">
        <id>Q8WXX7</id>
    </interactant>
    <interactant intactId="EBI-2827999">
        <id>Q86SE9</id>
        <label>PCGF5</label>
    </interactant>
    <organismsDiffer>false</organismsDiffer>
    <experiments>8</experiments>
</comment>
<comment type="interaction">
    <interactant intactId="EBI-2875359">
        <id>Q8WXX7</id>
    </interactant>
    <interactant intactId="EBI-722416">
        <id>Q99496</id>
        <label>RNF2</label>
    </interactant>
    <organismsDiffer>false</organismsDiffer>
    <experiments>7</experiments>
</comment>
<comment type="interaction">
    <interactant intactId="EBI-12140769">
        <id>Q8WXX7-2</id>
    </interactant>
    <interactant intactId="EBI-3867333">
        <id>A8MQ03</id>
        <label>CYSRT1</label>
    </interactant>
    <organismsDiffer>false</organismsDiffer>
    <experiments>3</experiments>
</comment>
<comment type="interaction">
    <interactant intactId="EBI-12140769">
        <id>Q8WXX7-2</id>
    </interactant>
    <interactant intactId="EBI-22311199">
        <id>Q3LI67</id>
        <label>KRTAP6-3</label>
    </interactant>
    <organismsDiffer>false</organismsDiffer>
    <experiments>3</experiments>
</comment>
<comment type="subcellular location">
    <subcellularLocation>
        <location evidence="5">Nucleus</location>
    </subcellularLocation>
    <subcellularLocation>
        <location evidence="1">Cytoplasm</location>
        <location evidence="1">Cytoskeleton</location>
    </subcellularLocation>
    <subcellularLocation>
        <location evidence="1">Cell projection</location>
        <location evidence="1">Growth cone</location>
    </subcellularLocation>
    <text evidence="1">Detected both in cytoplasm and nucleus. Colocalizes with RAC1 at actin-rich growth cones. Detected on the promoter region of actively transcribed genes.</text>
</comment>
<comment type="alternative products">
    <event type="alternative splicing"/>
    <isoform>
        <id>Q8WXX7-1</id>
        <name evidence="9">1</name>
        <sequence type="displayed"/>
    </isoform>
    <isoform>
        <id>Q8WXX7-2</id>
        <name evidence="9">2</name>
        <sequence type="described" ref="VSP_003792"/>
    </isoform>
    <isoform>
        <id>Q8WXX7-3</id>
        <name evidence="9">3</name>
        <sequence type="described" ref="VSP_043556 VSP_043557"/>
    </isoform>
    <isoform>
        <id>Q8WXX7-5</id>
        <name evidence="9">5</name>
        <sequence type="described" ref="VSP_057063 VSP_003792"/>
    </isoform>
</comment>
<comment type="tissue specificity">
    <text evidence="3 4">Strongly expressed in brain, skeletal muscle and kidney. Also expressed in placenta, lung and leukocytes.</text>
</comment>
<comment type="domain">
    <text evidence="1">The Pro-rich region is important for the interaction with RAC guanine nucleotide exchange factors and the subsequent activation of RAC1, which then promotes lamellipodia formation.</text>
</comment>
<comment type="disease" evidence="4">
    <disease id="DI-04120">
        <name>Intellectual developmental disorder, autosomal dominant 26</name>
        <acronym>MRD26</acronym>
        <description>A disorder characterized by significantly below average general intellectual functioning associated with impairments in adaptive behavior and manifested during the developmental period. Additional MRD26 features include autism, short stature, microcephaly, cerebral palsy, and facial dysmorphisms.</description>
        <dbReference type="MIM" id="615834"/>
    </disease>
    <text>The disease is caused by variants affecting the gene represented in this entry.</text>
</comment>
<comment type="similarity">
    <text evidence="9">Belongs to the AUTS2 family.</text>
</comment>
<comment type="sequence caution" evidence="9">
    <conflict type="erroneous initiation">
        <sequence resource="EMBL-CDS" id="BAA23714"/>
    </conflict>
    <text>Extended N-terminus.</text>
</comment>
<gene>
    <name type="primary">AUTS2</name>
    <name type="synonym">KIAA0442</name>
</gene>
<dbReference type="EMBL" id="JQ670866">
    <property type="protein sequence ID" value="AFY24235.1"/>
    <property type="molecule type" value="mRNA"/>
</dbReference>
<dbReference type="EMBL" id="JQ670867">
    <property type="protein sequence ID" value="AFY24236.1"/>
    <property type="molecule type" value="mRNA"/>
</dbReference>
<dbReference type="EMBL" id="AF326917">
    <property type="protein sequence ID" value="AAL37411.1"/>
    <property type="molecule type" value="mRNA"/>
</dbReference>
<dbReference type="EMBL" id="AB007902">
    <property type="protein sequence ID" value="BAA23714.2"/>
    <property type="status" value="ALT_INIT"/>
    <property type="molecule type" value="mRNA"/>
</dbReference>
<dbReference type="EMBL" id="AC004773">
    <property type="status" value="NOT_ANNOTATED_CDS"/>
    <property type="molecule type" value="Genomic_DNA"/>
</dbReference>
<dbReference type="EMBL" id="AC004881">
    <property type="status" value="NOT_ANNOTATED_CDS"/>
    <property type="molecule type" value="Genomic_DNA"/>
</dbReference>
<dbReference type="EMBL" id="AC004927">
    <property type="status" value="NOT_ANNOTATED_CDS"/>
    <property type="molecule type" value="Genomic_DNA"/>
</dbReference>
<dbReference type="EMBL" id="AC006012">
    <property type="status" value="NOT_ANNOTATED_CDS"/>
    <property type="molecule type" value="Genomic_DNA"/>
</dbReference>
<dbReference type="EMBL" id="AC006317">
    <property type="status" value="NOT_ANNOTATED_CDS"/>
    <property type="molecule type" value="Genomic_DNA"/>
</dbReference>
<dbReference type="EMBL" id="AC006318">
    <property type="status" value="NOT_ANNOTATED_CDS"/>
    <property type="molecule type" value="Genomic_DNA"/>
</dbReference>
<dbReference type="EMBL" id="AC006319">
    <property type="status" value="NOT_ANNOTATED_CDS"/>
    <property type="molecule type" value="Genomic_DNA"/>
</dbReference>
<dbReference type="EMBL" id="AC006361">
    <property type="status" value="NOT_ANNOTATED_CDS"/>
    <property type="molecule type" value="Genomic_DNA"/>
</dbReference>
<dbReference type="EMBL" id="AC073148">
    <property type="status" value="NOT_ANNOTATED_CDS"/>
    <property type="molecule type" value="Genomic_DNA"/>
</dbReference>
<dbReference type="EMBL" id="AC073873">
    <property type="status" value="NOT_ANNOTATED_CDS"/>
    <property type="molecule type" value="Genomic_DNA"/>
</dbReference>
<dbReference type="EMBL" id="AC093487">
    <property type="status" value="NOT_ANNOTATED_CDS"/>
    <property type="molecule type" value="Genomic_DNA"/>
</dbReference>
<dbReference type="EMBL" id="AC093679">
    <property type="status" value="NOT_ANNOTATED_CDS"/>
    <property type="molecule type" value="Genomic_DNA"/>
</dbReference>
<dbReference type="EMBL" id="AC093685">
    <property type="status" value="NOT_ANNOTATED_CDS"/>
    <property type="molecule type" value="Genomic_DNA"/>
</dbReference>
<dbReference type="EMBL" id="CH236952">
    <property type="protein sequence ID" value="EAL23968.1"/>
    <property type="molecule type" value="Genomic_DNA"/>
</dbReference>
<dbReference type="EMBL" id="BC011643">
    <property type="protein sequence ID" value="AAH11643.1"/>
    <property type="molecule type" value="mRNA"/>
</dbReference>
<dbReference type="EMBL" id="BC064693">
    <property type="protein sequence ID" value="AAH64693.1"/>
    <property type="molecule type" value="mRNA"/>
</dbReference>
<dbReference type="CCDS" id="CCDS47601.1">
    <molecule id="Q8WXX7-2"/>
</dbReference>
<dbReference type="CCDS" id="CCDS47602.1">
    <molecule id="Q8WXX7-3"/>
</dbReference>
<dbReference type="CCDS" id="CCDS5539.1">
    <molecule id="Q8WXX7-1"/>
</dbReference>
<dbReference type="PIR" id="T00065">
    <property type="entry name" value="T00065"/>
</dbReference>
<dbReference type="RefSeq" id="NP_001120703.1">
    <molecule id="Q8WXX7-2"/>
    <property type="nucleotide sequence ID" value="NM_001127231.3"/>
</dbReference>
<dbReference type="RefSeq" id="NP_001120704.1">
    <molecule id="Q8WXX7-3"/>
    <property type="nucleotide sequence ID" value="NM_001127232.3"/>
</dbReference>
<dbReference type="RefSeq" id="NP_056385.1">
    <molecule id="Q8WXX7-1"/>
    <property type="nucleotide sequence ID" value="NM_015570.4"/>
</dbReference>
<dbReference type="BioGRID" id="117516">
    <property type="interactions" value="39"/>
</dbReference>
<dbReference type="ComplexPortal" id="CPX-2283">
    <property type="entry name" value="Non-canonical polycomb repressive complex 1.3, RING1-RYBP-CKIIA2 variant"/>
</dbReference>
<dbReference type="ComplexPortal" id="CPX-2285">
    <property type="entry name" value="Non-canonical polycomb repressive complex 1.3, RING1-RYBP-CKIIA1-A2 variant"/>
</dbReference>
<dbReference type="ComplexPortal" id="CPX-2286">
    <property type="entry name" value="Non-canonical polycomb repressive complex 1.3, RING1-RYBP-CKIIA1 variant"/>
</dbReference>
<dbReference type="ComplexPortal" id="CPX-2288">
    <property type="entry name" value="Non-canonical polycomb repressive complex 1.3, RING1-YAF2-CKIIA2 variant"/>
</dbReference>
<dbReference type="ComplexPortal" id="CPX-2289">
    <property type="entry name" value="Non-canonical polycomb repressive complex 1.3, RING1-YAF2-CKIIA1-A2 variant"/>
</dbReference>
<dbReference type="ComplexPortal" id="CPX-2290">
    <property type="entry name" value="Non-canonical polycomb repressive complex 1.3, RING1-YAF2-CKIIA1 variant"/>
</dbReference>
<dbReference type="ComplexPortal" id="CPX-2291">
    <property type="entry name" value="Non-canonical polycomb repressive complex 1.3, RING2-RYBP-CKIIA2 variant"/>
</dbReference>
<dbReference type="ComplexPortal" id="CPX-2292">
    <property type="entry name" value="Non-canonical polycomb repressive complex 1.3, RING2-RYBP-CKIIA1-A2 variant"/>
</dbReference>
<dbReference type="ComplexPortal" id="CPX-2295">
    <property type="entry name" value="Non-canonical polycomb repressive complex 1.3, RING2-RYBP-CKIIA1 variant"/>
</dbReference>
<dbReference type="ComplexPortal" id="CPX-2296">
    <property type="entry name" value="Non-canonical polycomb repressive complex 1.3, RING2-YAF2-CKIIA2 variant"/>
</dbReference>
<dbReference type="ComplexPortal" id="CPX-2297">
    <property type="entry name" value="Non-canonical polycomb repressive complex 1.3, RING2-YAF2-CKIIA1-A2 variant"/>
</dbReference>
<dbReference type="ComplexPortal" id="CPX-2298">
    <property type="entry name" value="Non-canonical polycomb repressive complex 1.3, RING2-YAF2-CKIIA1 variant"/>
</dbReference>
<dbReference type="ComplexPortal" id="CPX-7581">
    <property type="entry name" value="Non-canonical polycomb repressive complex 1.5, RING1-RYBP-CKIIA2 variant"/>
</dbReference>
<dbReference type="ComplexPortal" id="CPX-7582">
    <property type="entry name" value="Non-canonical polycomb repressive complex 1.5, RING1-RYBP-CKIIA1-A2 variant"/>
</dbReference>
<dbReference type="ComplexPortal" id="CPX-7583">
    <property type="entry name" value="Non-canonical polycomb repressive complex 1.5, RING1-RYBP-CKIIA1 variant"/>
</dbReference>
<dbReference type="ComplexPortal" id="CPX-7584">
    <property type="entry name" value="Non-canonical polycomb repressive complex 1.5, RING1-YAF2-CKIIA2 variant"/>
</dbReference>
<dbReference type="ComplexPortal" id="CPX-7585">
    <property type="entry name" value="Non-canonical polycomb repressive complex 1.5, RING1-YAF2-CKIIA1-A2 variant"/>
</dbReference>
<dbReference type="ComplexPortal" id="CPX-7586">
    <property type="entry name" value="Non-canonical polycomb repressive complex 1.5, RING1-YAF2-CKIIA1 variant"/>
</dbReference>
<dbReference type="ComplexPortal" id="CPX-7587">
    <property type="entry name" value="Non-canonical polycomb repressive complex 1.5, RING2-RYBP-CKIIA2 variant"/>
</dbReference>
<dbReference type="ComplexPortal" id="CPX-7588">
    <property type="entry name" value="Non-canonical polycomb repressive complex 1.5, RING2-RYBP-CKIIA1-A2 variant"/>
</dbReference>
<dbReference type="ComplexPortal" id="CPX-7589">
    <property type="entry name" value="Non-canonical polycomb repressive complex 1.5, RING2-RYBP-CKIIA1 variant"/>
</dbReference>
<dbReference type="ComplexPortal" id="CPX-7590">
    <property type="entry name" value="Non-canonical polycomb repressive complex 1.5, RING2-YAF2-CKIIA2 variant"/>
</dbReference>
<dbReference type="ComplexPortal" id="CPX-7591">
    <property type="entry name" value="Non-canonical polycomb repressive complex 1.5, RING2-YAF2-CKIIA1-A2 variant"/>
</dbReference>
<dbReference type="ComplexPortal" id="CPX-7592">
    <property type="entry name" value="Non-canonical polycomb repressive complex 1.5, RING2-YAF2-CKIIA1 variant"/>
</dbReference>
<dbReference type="CORUM" id="Q8WXX7"/>
<dbReference type="DIP" id="DIP-61355N"/>
<dbReference type="FunCoup" id="Q8WXX7">
    <property type="interactions" value="307"/>
</dbReference>
<dbReference type="IntAct" id="Q8WXX7">
    <property type="interactions" value="31"/>
</dbReference>
<dbReference type="MINT" id="Q8WXX7"/>
<dbReference type="STRING" id="9606.ENSP00000344087"/>
<dbReference type="GlyCosmos" id="Q8WXX7">
    <property type="glycosylation" value="1 site, 1 glycan"/>
</dbReference>
<dbReference type="GlyGen" id="Q8WXX7">
    <property type="glycosylation" value="4 sites, 1 O-linked glycan (1 site)"/>
</dbReference>
<dbReference type="iPTMnet" id="Q8WXX7"/>
<dbReference type="PhosphoSitePlus" id="Q8WXX7"/>
<dbReference type="BioMuta" id="AUTS2"/>
<dbReference type="DMDM" id="23396464"/>
<dbReference type="jPOST" id="Q8WXX7"/>
<dbReference type="MassIVE" id="Q8WXX7"/>
<dbReference type="PaxDb" id="9606-ENSP00000344087"/>
<dbReference type="PeptideAtlas" id="Q8WXX7"/>
<dbReference type="ProteomicsDB" id="75113">
    <molecule id="Q8WXX7-1"/>
</dbReference>
<dbReference type="ProteomicsDB" id="75114">
    <molecule id="Q8WXX7-2"/>
</dbReference>
<dbReference type="ProteomicsDB" id="75115">
    <molecule id="Q8WXX7-3"/>
</dbReference>
<dbReference type="Pumba" id="Q8WXX7"/>
<dbReference type="Antibodypedia" id="623">
    <property type="antibodies" value="95 antibodies from 24 providers"/>
</dbReference>
<dbReference type="DNASU" id="26053"/>
<dbReference type="Ensembl" id="ENST00000342771.10">
    <molecule id="Q8WXX7-1"/>
    <property type="protein sequence ID" value="ENSP00000344087.4"/>
    <property type="gene ID" value="ENSG00000158321.19"/>
</dbReference>
<dbReference type="Ensembl" id="ENST00000403018.3">
    <molecule id="Q8WXX7-3"/>
    <property type="protein sequence ID" value="ENSP00000385572.2"/>
    <property type="gene ID" value="ENSG00000158321.19"/>
</dbReference>
<dbReference type="Ensembl" id="ENST00000406775.6">
    <molecule id="Q8WXX7-2"/>
    <property type="protein sequence ID" value="ENSP00000385263.2"/>
    <property type="gene ID" value="ENSG00000158321.19"/>
</dbReference>
<dbReference type="GeneID" id="26053"/>
<dbReference type="KEGG" id="hsa:26053"/>
<dbReference type="MANE-Select" id="ENST00000342771.10">
    <property type="protein sequence ID" value="ENSP00000344087.4"/>
    <property type="RefSeq nucleotide sequence ID" value="NM_015570.4"/>
    <property type="RefSeq protein sequence ID" value="NP_056385.1"/>
</dbReference>
<dbReference type="UCSC" id="uc003tvv.5">
    <molecule id="Q8WXX7-1"/>
    <property type="organism name" value="human"/>
</dbReference>
<dbReference type="AGR" id="HGNC:14262"/>
<dbReference type="CTD" id="26053"/>
<dbReference type="DisGeNET" id="26053"/>
<dbReference type="GeneCards" id="AUTS2"/>
<dbReference type="HGNC" id="HGNC:14262">
    <property type="gene designation" value="AUTS2"/>
</dbReference>
<dbReference type="HPA" id="ENSG00000158321">
    <property type="expression patterns" value="Tissue enhanced (salivary)"/>
</dbReference>
<dbReference type="MalaCards" id="AUTS2"/>
<dbReference type="MIM" id="607270">
    <property type="type" value="gene"/>
</dbReference>
<dbReference type="MIM" id="615834">
    <property type="type" value="phenotype"/>
</dbReference>
<dbReference type="neXtProt" id="NX_Q8WXX7"/>
<dbReference type="OpenTargets" id="ENSG00000158321"/>
<dbReference type="Orphanet" id="352490">
    <property type="disease" value="Autism spectrum disorder due to AUTS2 deficiency"/>
</dbReference>
<dbReference type="Orphanet" id="641372">
    <property type="disease" value="B-lymphoblastic leukemia/lymphoma with t(7;9)(q11.2;p13.2)"/>
</dbReference>
<dbReference type="PharmGKB" id="PA134863175"/>
<dbReference type="VEuPathDB" id="HostDB:ENSG00000158321"/>
<dbReference type="eggNOG" id="ENOG502QSH4">
    <property type="taxonomic scope" value="Eukaryota"/>
</dbReference>
<dbReference type="GeneTree" id="ENSGT00940000154823"/>
<dbReference type="HOGENOM" id="CLU_1258740_0_0_1"/>
<dbReference type="InParanoid" id="Q8WXX7"/>
<dbReference type="OMA" id="REDYEHS"/>
<dbReference type="OrthoDB" id="10060000at2759"/>
<dbReference type="PAN-GO" id="Q8WXX7">
    <property type="GO annotations" value="0 GO annotations based on evolutionary models"/>
</dbReference>
<dbReference type="PhylomeDB" id="Q8WXX7"/>
<dbReference type="TreeFam" id="TF331929"/>
<dbReference type="PathwayCommons" id="Q8WXX7"/>
<dbReference type="Reactome" id="R-HSA-8939243">
    <property type="pathway name" value="RUNX1 interacts with co-factors whose precise effect on RUNX1 targets is not known"/>
</dbReference>
<dbReference type="SignaLink" id="Q8WXX7"/>
<dbReference type="SIGNOR" id="Q8WXX7"/>
<dbReference type="BioGRID-ORCS" id="26053">
    <property type="hits" value="15 hits in 1146 CRISPR screens"/>
</dbReference>
<dbReference type="ChiTaRS" id="AUTS2">
    <property type="organism name" value="human"/>
</dbReference>
<dbReference type="GenomeRNAi" id="26053"/>
<dbReference type="Pharos" id="Q8WXX7">
    <property type="development level" value="Tbio"/>
</dbReference>
<dbReference type="PRO" id="PR:Q8WXX7"/>
<dbReference type="Proteomes" id="UP000005640">
    <property type="component" value="Chromosome 7"/>
</dbReference>
<dbReference type="RNAct" id="Q8WXX7">
    <property type="molecule type" value="protein"/>
</dbReference>
<dbReference type="Bgee" id="ENSG00000158321">
    <property type="expression patterns" value="Expressed in cortical plate and 207 other cell types or tissues"/>
</dbReference>
<dbReference type="ExpressionAtlas" id="Q8WXX7">
    <property type="expression patterns" value="baseline and differential"/>
</dbReference>
<dbReference type="GO" id="GO:0005737">
    <property type="term" value="C:cytoplasm"/>
    <property type="evidence" value="ECO:0007669"/>
    <property type="project" value="UniProtKB-KW"/>
</dbReference>
<dbReference type="GO" id="GO:0005856">
    <property type="term" value="C:cytoskeleton"/>
    <property type="evidence" value="ECO:0007669"/>
    <property type="project" value="UniProtKB-SubCell"/>
</dbReference>
<dbReference type="GO" id="GO:0030426">
    <property type="term" value="C:growth cone"/>
    <property type="evidence" value="ECO:0000250"/>
    <property type="project" value="UniProtKB"/>
</dbReference>
<dbReference type="GO" id="GO:0005634">
    <property type="term" value="C:nucleus"/>
    <property type="evidence" value="ECO:0007669"/>
    <property type="project" value="UniProtKB-SubCell"/>
</dbReference>
<dbReference type="GO" id="GO:0003682">
    <property type="term" value="F:chromatin binding"/>
    <property type="evidence" value="ECO:0000314"/>
    <property type="project" value="MGI"/>
</dbReference>
<dbReference type="GO" id="GO:0030036">
    <property type="term" value="P:actin cytoskeleton organization"/>
    <property type="evidence" value="ECO:0000250"/>
    <property type="project" value="UniProtKB"/>
</dbReference>
<dbReference type="GO" id="GO:0048675">
    <property type="term" value="P:axon extension"/>
    <property type="evidence" value="ECO:0000250"/>
    <property type="project" value="UniProtKB"/>
</dbReference>
<dbReference type="GO" id="GO:0097484">
    <property type="term" value="P:dendrite extension"/>
    <property type="evidence" value="ECO:0000250"/>
    <property type="project" value="UniProtKB"/>
</dbReference>
<dbReference type="GO" id="GO:0001764">
    <property type="term" value="P:neuron migration"/>
    <property type="evidence" value="ECO:0000250"/>
    <property type="project" value="UniProtKB"/>
</dbReference>
<dbReference type="GO" id="GO:0010592">
    <property type="term" value="P:positive regulation of lamellipodium assembly"/>
    <property type="evidence" value="ECO:0000250"/>
    <property type="project" value="UniProtKB"/>
</dbReference>
<dbReference type="GO" id="GO:0035022">
    <property type="term" value="P:positive regulation of Rac protein signal transduction"/>
    <property type="evidence" value="ECO:0000250"/>
    <property type="project" value="UniProtKB"/>
</dbReference>
<dbReference type="GO" id="GO:0045944">
    <property type="term" value="P:positive regulation of transcription by RNA polymerase II"/>
    <property type="evidence" value="ECO:0000314"/>
    <property type="project" value="MGI"/>
</dbReference>
<dbReference type="InterPro" id="IPR023246">
    <property type="entry name" value="AUTS2"/>
</dbReference>
<dbReference type="PANTHER" id="PTHR14429:SF5">
    <property type="entry name" value="AUTISM SUSCEPTIBILITY GENE 2 PROTEIN"/>
    <property type="match status" value="1"/>
</dbReference>
<dbReference type="PANTHER" id="PTHR14429">
    <property type="entry name" value="FIBROSIN FAMILY MEMBER"/>
    <property type="match status" value="1"/>
</dbReference>
<dbReference type="Pfam" id="PF15336">
    <property type="entry name" value="Auts2"/>
    <property type="match status" value="1"/>
</dbReference>
<dbReference type="PRINTS" id="PR02044">
    <property type="entry name" value="FIBROSIN1LPF"/>
</dbReference>
<protein>
    <recommendedName>
        <fullName>Autism susceptibility gene 2 protein</fullName>
    </recommendedName>
</protein>